<evidence type="ECO:0000255" key="1">
    <source>
        <dbReference type="HAMAP-Rule" id="MF_00144"/>
    </source>
</evidence>
<gene>
    <name evidence="1" type="primary">mnmA</name>
    <name type="ordered locus">DP2955</name>
</gene>
<dbReference type="EC" id="2.8.1.13" evidence="1"/>
<dbReference type="EMBL" id="CR522870">
    <property type="protein sequence ID" value="CAG37684.1"/>
    <property type="molecule type" value="Genomic_DNA"/>
</dbReference>
<dbReference type="RefSeq" id="WP_011190196.1">
    <property type="nucleotide sequence ID" value="NC_006138.1"/>
</dbReference>
<dbReference type="SMR" id="Q6AIZ6"/>
<dbReference type="STRING" id="177439.DP2955"/>
<dbReference type="KEGG" id="dps:DP2955"/>
<dbReference type="eggNOG" id="COG0482">
    <property type="taxonomic scope" value="Bacteria"/>
</dbReference>
<dbReference type="HOGENOM" id="CLU_035188_1_0_7"/>
<dbReference type="OrthoDB" id="9800696at2"/>
<dbReference type="Proteomes" id="UP000000602">
    <property type="component" value="Chromosome"/>
</dbReference>
<dbReference type="GO" id="GO:0005737">
    <property type="term" value="C:cytoplasm"/>
    <property type="evidence" value="ECO:0007669"/>
    <property type="project" value="UniProtKB-SubCell"/>
</dbReference>
<dbReference type="GO" id="GO:0005524">
    <property type="term" value="F:ATP binding"/>
    <property type="evidence" value="ECO:0007669"/>
    <property type="project" value="UniProtKB-KW"/>
</dbReference>
<dbReference type="GO" id="GO:0000049">
    <property type="term" value="F:tRNA binding"/>
    <property type="evidence" value="ECO:0007669"/>
    <property type="project" value="UniProtKB-KW"/>
</dbReference>
<dbReference type="GO" id="GO:0103016">
    <property type="term" value="F:tRNA-uridine 2-sulfurtransferase activity"/>
    <property type="evidence" value="ECO:0007669"/>
    <property type="project" value="UniProtKB-EC"/>
</dbReference>
<dbReference type="GO" id="GO:0002143">
    <property type="term" value="P:tRNA wobble position uridine thiolation"/>
    <property type="evidence" value="ECO:0007669"/>
    <property type="project" value="TreeGrafter"/>
</dbReference>
<dbReference type="CDD" id="cd01998">
    <property type="entry name" value="MnmA_TRMU-like"/>
    <property type="match status" value="1"/>
</dbReference>
<dbReference type="FunFam" id="2.30.30.280:FF:000001">
    <property type="entry name" value="tRNA-specific 2-thiouridylase MnmA"/>
    <property type="match status" value="1"/>
</dbReference>
<dbReference type="Gene3D" id="2.30.30.280">
    <property type="entry name" value="Adenine nucleotide alpha hydrolases-like domains"/>
    <property type="match status" value="1"/>
</dbReference>
<dbReference type="Gene3D" id="3.40.50.620">
    <property type="entry name" value="HUPs"/>
    <property type="match status" value="1"/>
</dbReference>
<dbReference type="Gene3D" id="2.40.30.10">
    <property type="entry name" value="Translation factors"/>
    <property type="match status" value="1"/>
</dbReference>
<dbReference type="HAMAP" id="MF_00144">
    <property type="entry name" value="tRNA_thiouridyl_MnmA"/>
    <property type="match status" value="1"/>
</dbReference>
<dbReference type="InterPro" id="IPR004506">
    <property type="entry name" value="MnmA-like"/>
</dbReference>
<dbReference type="InterPro" id="IPR046885">
    <property type="entry name" value="MnmA-like_C"/>
</dbReference>
<dbReference type="InterPro" id="IPR046884">
    <property type="entry name" value="MnmA-like_central"/>
</dbReference>
<dbReference type="InterPro" id="IPR023382">
    <property type="entry name" value="MnmA-like_central_sf"/>
</dbReference>
<dbReference type="InterPro" id="IPR014729">
    <property type="entry name" value="Rossmann-like_a/b/a_fold"/>
</dbReference>
<dbReference type="NCBIfam" id="NF001138">
    <property type="entry name" value="PRK00143.1"/>
    <property type="match status" value="1"/>
</dbReference>
<dbReference type="NCBIfam" id="TIGR00420">
    <property type="entry name" value="trmU"/>
    <property type="match status" value="1"/>
</dbReference>
<dbReference type="PANTHER" id="PTHR11933:SF5">
    <property type="entry name" value="MITOCHONDRIAL TRNA-SPECIFIC 2-THIOURIDYLASE 1"/>
    <property type="match status" value="1"/>
</dbReference>
<dbReference type="PANTHER" id="PTHR11933">
    <property type="entry name" value="TRNA 5-METHYLAMINOMETHYL-2-THIOURIDYLATE -METHYLTRANSFERASE"/>
    <property type="match status" value="1"/>
</dbReference>
<dbReference type="Pfam" id="PF03054">
    <property type="entry name" value="tRNA_Me_trans"/>
    <property type="match status" value="1"/>
</dbReference>
<dbReference type="Pfam" id="PF20258">
    <property type="entry name" value="tRNA_Me_trans_C"/>
    <property type="match status" value="1"/>
</dbReference>
<dbReference type="Pfam" id="PF20259">
    <property type="entry name" value="tRNA_Me_trans_M"/>
    <property type="match status" value="1"/>
</dbReference>
<dbReference type="SUPFAM" id="SSF52402">
    <property type="entry name" value="Adenine nucleotide alpha hydrolases-like"/>
    <property type="match status" value="1"/>
</dbReference>
<keyword id="KW-0067">ATP-binding</keyword>
<keyword id="KW-0963">Cytoplasm</keyword>
<keyword id="KW-1015">Disulfide bond</keyword>
<keyword id="KW-0547">Nucleotide-binding</keyword>
<keyword id="KW-1185">Reference proteome</keyword>
<keyword id="KW-0694">RNA-binding</keyword>
<keyword id="KW-0808">Transferase</keyword>
<keyword id="KW-0819">tRNA processing</keyword>
<keyword id="KW-0820">tRNA-binding</keyword>
<sequence length="344" mass="38527">MIKNITGIAMSGGVDSTATAILQKQKGPVLGFFMKLNQPDYETQRDRVSQIAQKLDIKLEIIDLTEEFQEYVLKYFSASYFKGLTPNPCIICNKEIKFGLFQQAILRQGVERIATGHYAQIHKTAAGYQLHKGVDPHKDQSYFLSRLSQEQLAHSIFPLGGMHKGAIYDLVEAHGFHDFRGTESQDVCFLEQDNVVDFLEQTAEFSASSGNIVMNDGKILGKHKGLHRYTVGQRRGLGISYPVPLYVINLDVKNNNVIVGENEQLFHKTMAISDIHWISQPEREDLLHASVHIRSTHKGAQASVILKENNRASVIFDEPQRAITPGQFATIYKDTQVLGSGVIL</sequence>
<feature type="chain" id="PRO_0000349614" description="tRNA-specific 2-thiouridylase MnmA">
    <location>
        <begin position="1"/>
        <end position="344"/>
    </location>
</feature>
<feature type="region of interest" description="Interaction with tRNA" evidence="1">
    <location>
        <begin position="138"/>
        <end position="140"/>
    </location>
</feature>
<feature type="active site" description="Nucleophile" evidence="1">
    <location>
        <position position="92"/>
    </location>
</feature>
<feature type="active site" description="Cysteine persulfide intermediate" evidence="1">
    <location>
        <position position="188"/>
    </location>
</feature>
<feature type="binding site" evidence="1">
    <location>
        <begin position="9"/>
        <end position="16"/>
    </location>
    <ligand>
        <name>ATP</name>
        <dbReference type="ChEBI" id="CHEBI:30616"/>
    </ligand>
</feature>
<feature type="binding site" evidence="1">
    <location>
        <position position="34"/>
    </location>
    <ligand>
        <name>ATP</name>
        <dbReference type="ChEBI" id="CHEBI:30616"/>
    </ligand>
</feature>
<feature type="binding site" evidence="1">
    <location>
        <position position="116"/>
    </location>
    <ligand>
        <name>ATP</name>
        <dbReference type="ChEBI" id="CHEBI:30616"/>
    </ligand>
</feature>
<feature type="site" description="Interaction with tRNA" evidence="1">
    <location>
        <position position="117"/>
    </location>
</feature>
<feature type="site" description="Interaction with tRNA" evidence="1">
    <location>
        <position position="327"/>
    </location>
</feature>
<feature type="disulfide bond" description="Alternate" evidence="1">
    <location>
        <begin position="92"/>
        <end position="188"/>
    </location>
</feature>
<accession>Q6AIZ6</accession>
<protein>
    <recommendedName>
        <fullName evidence="1">tRNA-specific 2-thiouridylase MnmA</fullName>
        <ecNumber evidence="1">2.8.1.13</ecNumber>
    </recommendedName>
</protein>
<reference key="1">
    <citation type="journal article" date="2004" name="Environ. Microbiol.">
        <title>The genome of Desulfotalea psychrophila, a sulfate-reducing bacterium from permanently cold Arctic sediments.</title>
        <authorList>
            <person name="Rabus R."/>
            <person name="Ruepp A."/>
            <person name="Frickey T."/>
            <person name="Rattei T."/>
            <person name="Fartmann B."/>
            <person name="Stark M."/>
            <person name="Bauer M."/>
            <person name="Zibat A."/>
            <person name="Lombardot T."/>
            <person name="Becker I."/>
            <person name="Amann J."/>
            <person name="Gellner K."/>
            <person name="Teeling H."/>
            <person name="Leuschner W.D."/>
            <person name="Gloeckner F.-O."/>
            <person name="Lupas A.N."/>
            <person name="Amann R."/>
            <person name="Klenk H.-P."/>
        </authorList>
    </citation>
    <scope>NUCLEOTIDE SEQUENCE [LARGE SCALE GENOMIC DNA]</scope>
    <source>
        <strain>DSM 12343 / LSv54</strain>
    </source>
</reference>
<comment type="function">
    <text evidence="1">Catalyzes the 2-thiolation of uridine at the wobble position (U34) of tRNA, leading to the formation of s(2)U34.</text>
</comment>
<comment type="catalytic activity">
    <reaction evidence="1">
        <text>S-sulfanyl-L-cysteinyl-[protein] + uridine(34) in tRNA + AH2 + ATP = 2-thiouridine(34) in tRNA + L-cysteinyl-[protein] + A + AMP + diphosphate + H(+)</text>
        <dbReference type="Rhea" id="RHEA:47032"/>
        <dbReference type="Rhea" id="RHEA-COMP:10131"/>
        <dbReference type="Rhea" id="RHEA-COMP:11726"/>
        <dbReference type="Rhea" id="RHEA-COMP:11727"/>
        <dbReference type="Rhea" id="RHEA-COMP:11728"/>
        <dbReference type="ChEBI" id="CHEBI:13193"/>
        <dbReference type="ChEBI" id="CHEBI:15378"/>
        <dbReference type="ChEBI" id="CHEBI:17499"/>
        <dbReference type="ChEBI" id="CHEBI:29950"/>
        <dbReference type="ChEBI" id="CHEBI:30616"/>
        <dbReference type="ChEBI" id="CHEBI:33019"/>
        <dbReference type="ChEBI" id="CHEBI:61963"/>
        <dbReference type="ChEBI" id="CHEBI:65315"/>
        <dbReference type="ChEBI" id="CHEBI:87170"/>
        <dbReference type="ChEBI" id="CHEBI:456215"/>
        <dbReference type="EC" id="2.8.1.13"/>
    </reaction>
</comment>
<comment type="subcellular location">
    <subcellularLocation>
        <location evidence="1">Cytoplasm</location>
    </subcellularLocation>
</comment>
<comment type="similarity">
    <text evidence="1">Belongs to the MnmA/TRMU family.</text>
</comment>
<name>MNMA_DESPS</name>
<proteinExistence type="inferred from homology"/>
<organism>
    <name type="scientific">Desulfotalea psychrophila (strain LSv54 / DSM 12343)</name>
    <dbReference type="NCBI Taxonomy" id="177439"/>
    <lineage>
        <taxon>Bacteria</taxon>
        <taxon>Pseudomonadati</taxon>
        <taxon>Thermodesulfobacteriota</taxon>
        <taxon>Desulfobulbia</taxon>
        <taxon>Desulfobulbales</taxon>
        <taxon>Desulfocapsaceae</taxon>
        <taxon>Desulfotalea</taxon>
    </lineage>
</organism>